<organism>
    <name type="scientific">Escherichia coli (strain K12)</name>
    <dbReference type="NCBI Taxonomy" id="83333"/>
    <lineage>
        <taxon>Bacteria</taxon>
        <taxon>Pseudomonadati</taxon>
        <taxon>Pseudomonadota</taxon>
        <taxon>Gammaproteobacteria</taxon>
        <taxon>Enterobacterales</taxon>
        <taxon>Enterobacteriaceae</taxon>
        <taxon>Escherichia</taxon>
    </lineage>
</organism>
<feature type="chain" id="PRO_0000168930" description="Uncharacterized protein YdcH">
    <location>
        <begin position="1"/>
        <end position="74"/>
    </location>
</feature>
<name>YDCH_ECOLI</name>
<accession>P0ACW6</accession>
<accession>P46135</accession>
<gene>
    <name type="primary">ydcH</name>
    <name type="ordered locus">b1426</name>
    <name type="ordered locus">JW5823</name>
</gene>
<sequence>MFPEYRDLISRLKNENPRFMSLFDKHNKLDHEIARKEGSDGRGYNAEVVRMKKQKLQLKDEMLKILQQESVKEV</sequence>
<dbReference type="EMBL" id="X15860">
    <property type="status" value="NOT_ANNOTATED_CDS"/>
    <property type="molecule type" value="Genomic_DNA"/>
</dbReference>
<dbReference type="EMBL" id="U00096">
    <property type="protein sequence ID" value="AAC74508.2"/>
    <property type="molecule type" value="Genomic_DNA"/>
</dbReference>
<dbReference type="EMBL" id="AP009048">
    <property type="protein sequence ID" value="BAA15047.2"/>
    <property type="molecule type" value="Genomic_DNA"/>
</dbReference>
<dbReference type="PIR" id="E64894">
    <property type="entry name" value="E64894"/>
</dbReference>
<dbReference type="RefSeq" id="NP_415943.4">
    <property type="nucleotide sequence ID" value="NC_000913.3"/>
</dbReference>
<dbReference type="RefSeq" id="WP_001296778.1">
    <property type="nucleotide sequence ID" value="NZ_STEB01000005.1"/>
</dbReference>
<dbReference type="SMR" id="P0ACW6"/>
<dbReference type="BioGRID" id="4260721">
    <property type="interactions" value="11"/>
</dbReference>
<dbReference type="FunCoup" id="P0ACW6">
    <property type="interactions" value="2"/>
</dbReference>
<dbReference type="STRING" id="511145.b1426"/>
<dbReference type="jPOST" id="P0ACW6"/>
<dbReference type="PaxDb" id="511145-b1426"/>
<dbReference type="EnsemblBacteria" id="AAC74508">
    <property type="protein sequence ID" value="AAC74508"/>
    <property type="gene ID" value="b1426"/>
</dbReference>
<dbReference type="GeneID" id="945997"/>
<dbReference type="KEGG" id="ecj:JW5823"/>
<dbReference type="KEGG" id="eco:b1426"/>
<dbReference type="KEGG" id="ecoc:C3026_08300"/>
<dbReference type="PATRIC" id="fig|1411691.4.peg.845"/>
<dbReference type="EchoBASE" id="EB2706"/>
<dbReference type="eggNOG" id="COG2841">
    <property type="taxonomic scope" value="Bacteria"/>
</dbReference>
<dbReference type="HOGENOM" id="CLU_165482_2_2_6"/>
<dbReference type="InParanoid" id="P0ACW6"/>
<dbReference type="OMA" id="MFHEYRD"/>
<dbReference type="OrthoDB" id="5616367at2"/>
<dbReference type="PhylomeDB" id="P0ACW6"/>
<dbReference type="BioCyc" id="EcoCyc:EG12865-MONOMER"/>
<dbReference type="PRO" id="PR:P0ACW6"/>
<dbReference type="Proteomes" id="UP000000625">
    <property type="component" value="Chromosome"/>
</dbReference>
<dbReference type="Gene3D" id="6.10.280.50">
    <property type="match status" value="1"/>
</dbReference>
<dbReference type="InterPro" id="IPR007420">
    <property type="entry name" value="DUF465"/>
</dbReference>
<dbReference type="InterPro" id="IPR038444">
    <property type="entry name" value="DUF465_sf"/>
</dbReference>
<dbReference type="NCBIfam" id="NF008505">
    <property type="entry name" value="PRK11415.1"/>
    <property type="match status" value="1"/>
</dbReference>
<dbReference type="Pfam" id="PF04325">
    <property type="entry name" value="DUF465"/>
    <property type="match status" value="1"/>
</dbReference>
<keyword id="KW-1185">Reference proteome</keyword>
<protein>
    <recommendedName>
        <fullName>Uncharacterized protein YdcH</fullName>
    </recommendedName>
</protein>
<reference key="1">
    <citation type="journal article" date="1989" name="Mol. Gen. Genet.">
        <title>Cloning and molecular characterization of the gene rimL which encodes an enzyme acetylating ribosomal protein L12 of Escherichia coli K12.</title>
        <authorList>
            <person name="Tanaka S."/>
            <person name="Matsushita Y."/>
            <person name="Yoshikawa A."/>
            <person name="Isono K."/>
        </authorList>
    </citation>
    <scope>NUCLEOTIDE SEQUENCE [GENOMIC DNA]</scope>
    <source>
        <strain>MB2052</strain>
    </source>
</reference>
<reference key="2">
    <citation type="journal article" date="1996" name="DNA Res.">
        <title>A 570-kb DNA sequence of the Escherichia coli K-12 genome corresponding to the 28.0-40.1 min region on the linkage map.</title>
        <authorList>
            <person name="Aiba H."/>
            <person name="Baba T."/>
            <person name="Fujita K."/>
            <person name="Hayashi K."/>
            <person name="Inada T."/>
            <person name="Isono K."/>
            <person name="Itoh T."/>
            <person name="Kasai H."/>
            <person name="Kashimoto K."/>
            <person name="Kimura S."/>
            <person name="Kitakawa M."/>
            <person name="Kitagawa M."/>
            <person name="Makino K."/>
            <person name="Miki T."/>
            <person name="Mizobuchi K."/>
            <person name="Mori H."/>
            <person name="Mori T."/>
            <person name="Motomura K."/>
            <person name="Nakade S."/>
            <person name="Nakamura Y."/>
            <person name="Nashimoto H."/>
            <person name="Nishio Y."/>
            <person name="Oshima T."/>
            <person name="Saito N."/>
            <person name="Sampei G."/>
            <person name="Seki Y."/>
            <person name="Sivasundaram S."/>
            <person name="Tagami H."/>
            <person name="Takeda J."/>
            <person name="Takemoto K."/>
            <person name="Takeuchi Y."/>
            <person name="Wada C."/>
            <person name="Yamamoto Y."/>
            <person name="Horiuchi T."/>
        </authorList>
    </citation>
    <scope>NUCLEOTIDE SEQUENCE [LARGE SCALE GENOMIC DNA]</scope>
    <source>
        <strain>K12 / W3110 / ATCC 27325 / DSM 5911</strain>
    </source>
</reference>
<reference key="3">
    <citation type="journal article" date="1997" name="Science">
        <title>The complete genome sequence of Escherichia coli K-12.</title>
        <authorList>
            <person name="Blattner F.R."/>
            <person name="Plunkett G. III"/>
            <person name="Bloch C.A."/>
            <person name="Perna N.T."/>
            <person name="Burland V."/>
            <person name="Riley M."/>
            <person name="Collado-Vides J."/>
            <person name="Glasner J.D."/>
            <person name="Rode C.K."/>
            <person name="Mayhew G.F."/>
            <person name="Gregor J."/>
            <person name="Davis N.W."/>
            <person name="Kirkpatrick H.A."/>
            <person name="Goeden M.A."/>
            <person name="Rose D.J."/>
            <person name="Mau B."/>
            <person name="Shao Y."/>
        </authorList>
    </citation>
    <scope>NUCLEOTIDE SEQUENCE [LARGE SCALE GENOMIC DNA]</scope>
    <source>
        <strain>K12 / MG1655 / ATCC 47076</strain>
    </source>
</reference>
<reference key="4">
    <citation type="journal article" date="2006" name="Mol. Syst. Biol.">
        <title>Highly accurate genome sequences of Escherichia coli K-12 strains MG1655 and W3110.</title>
        <authorList>
            <person name="Hayashi K."/>
            <person name="Morooka N."/>
            <person name="Yamamoto Y."/>
            <person name="Fujita K."/>
            <person name="Isono K."/>
            <person name="Choi S."/>
            <person name="Ohtsubo E."/>
            <person name="Baba T."/>
            <person name="Wanner B.L."/>
            <person name="Mori H."/>
            <person name="Horiuchi T."/>
        </authorList>
    </citation>
    <scope>NUCLEOTIDE SEQUENCE [LARGE SCALE GENOMIC DNA]</scope>
    <source>
        <strain>K12 / W3110 / ATCC 27325 / DSM 5911</strain>
    </source>
</reference>
<reference key="5">
    <citation type="journal article" date="1995" name="Nucleic Acids Res.">
        <title>Detection of new genes in a bacterial genome using Markov models for three gene classes.</title>
        <authorList>
            <person name="Borodovsky M."/>
            <person name="McIninch J."/>
            <person name="Koonin E.V."/>
            <person name="Rudd K.E."/>
            <person name="Medigue C."/>
            <person name="Danchin A."/>
        </authorList>
    </citation>
    <scope>IDENTIFICATION</scope>
</reference>
<proteinExistence type="predicted"/>